<dbReference type="EC" id="6.3.5.-" evidence="1"/>
<dbReference type="EMBL" id="CP000551">
    <property type="protein sequence ID" value="ABM69544.1"/>
    <property type="molecule type" value="Genomic_DNA"/>
</dbReference>
<dbReference type="RefSeq" id="WP_011817728.1">
    <property type="nucleotide sequence ID" value="NC_008816.1"/>
</dbReference>
<dbReference type="SMR" id="A2BP33"/>
<dbReference type="STRING" id="146891.A9601_02561"/>
<dbReference type="KEGG" id="pmb:A9601_02561"/>
<dbReference type="eggNOG" id="COG0721">
    <property type="taxonomic scope" value="Bacteria"/>
</dbReference>
<dbReference type="HOGENOM" id="CLU_105899_1_2_3"/>
<dbReference type="OrthoDB" id="9813938at2"/>
<dbReference type="Proteomes" id="UP000002590">
    <property type="component" value="Chromosome"/>
</dbReference>
<dbReference type="GO" id="GO:0050566">
    <property type="term" value="F:asparaginyl-tRNA synthase (glutamine-hydrolyzing) activity"/>
    <property type="evidence" value="ECO:0007669"/>
    <property type="project" value="RHEA"/>
</dbReference>
<dbReference type="GO" id="GO:0005524">
    <property type="term" value="F:ATP binding"/>
    <property type="evidence" value="ECO:0007669"/>
    <property type="project" value="UniProtKB-KW"/>
</dbReference>
<dbReference type="GO" id="GO:0050567">
    <property type="term" value="F:glutaminyl-tRNA synthase (glutamine-hydrolyzing) activity"/>
    <property type="evidence" value="ECO:0007669"/>
    <property type="project" value="UniProtKB-UniRule"/>
</dbReference>
<dbReference type="GO" id="GO:0070681">
    <property type="term" value="P:glutaminyl-tRNAGln biosynthesis via transamidation"/>
    <property type="evidence" value="ECO:0007669"/>
    <property type="project" value="TreeGrafter"/>
</dbReference>
<dbReference type="GO" id="GO:0006450">
    <property type="term" value="P:regulation of translational fidelity"/>
    <property type="evidence" value="ECO:0007669"/>
    <property type="project" value="InterPro"/>
</dbReference>
<dbReference type="GO" id="GO:0006412">
    <property type="term" value="P:translation"/>
    <property type="evidence" value="ECO:0007669"/>
    <property type="project" value="UniProtKB-UniRule"/>
</dbReference>
<dbReference type="Gene3D" id="1.10.20.60">
    <property type="entry name" value="Glu-tRNAGln amidotransferase C subunit, N-terminal domain"/>
    <property type="match status" value="1"/>
</dbReference>
<dbReference type="HAMAP" id="MF_00122">
    <property type="entry name" value="GatC"/>
    <property type="match status" value="1"/>
</dbReference>
<dbReference type="InterPro" id="IPR036113">
    <property type="entry name" value="Asp/Glu-ADT_sf_sub_c"/>
</dbReference>
<dbReference type="InterPro" id="IPR003837">
    <property type="entry name" value="GatC"/>
</dbReference>
<dbReference type="NCBIfam" id="TIGR00135">
    <property type="entry name" value="gatC"/>
    <property type="match status" value="1"/>
</dbReference>
<dbReference type="PANTHER" id="PTHR15004">
    <property type="entry name" value="GLUTAMYL-TRNA(GLN) AMIDOTRANSFERASE SUBUNIT C, MITOCHONDRIAL"/>
    <property type="match status" value="1"/>
</dbReference>
<dbReference type="PANTHER" id="PTHR15004:SF0">
    <property type="entry name" value="GLUTAMYL-TRNA(GLN) AMIDOTRANSFERASE SUBUNIT C, MITOCHONDRIAL"/>
    <property type="match status" value="1"/>
</dbReference>
<dbReference type="Pfam" id="PF02686">
    <property type="entry name" value="GatC"/>
    <property type="match status" value="1"/>
</dbReference>
<dbReference type="SUPFAM" id="SSF141000">
    <property type="entry name" value="Glu-tRNAGln amidotransferase C subunit"/>
    <property type="match status" value="1"/>
</dbReference>
<reference key="1">
    <citation type="journal article" date="2007" name="PLoS Genet.">
        <title>Patterns and implications of gene gain and loss in the evolution of Prochlorococcus.</title>
        <authorList>
            <person name="Kettler G.C."/>
            <person name="Martiny A.C."/>
            <person name="Huang K."/>
            <person name="Zucker J."/>
            <person name="Coleman M.L."/>
            <person name="Rodrigue S."/>
            <person name="Chen F."/>
            <person name="Lapidus A."/>
            <person name="Ferriera S."/>
            <person name="Johnson J."/>
            <person name="Steglich C."/>
            <person name="Church G.M."/>
            <person name="Richardson P."/>
            <person name="Chisholm S.W."/>
        </authorList>
    </citation>
    <scope>NUCLEOTIDE SEQUENCE [LARGE SCALE GENOMIC DNA]</scope>
    <source>
        <strain>AS9601</strain>
    </source>
</reference>
<accession>A2BP33</accession>
<proteinExistence type="inferred from homology"/>
<protein>
    <recommendedName>
        <fullName evidence="1">Aspartyl/glutamyl-tRNA(Asn/Gln) amidotransferase subunit C</fullName>
        <shortName evidence="1">Asp/Glu-ADT subunit C</shortName>
        <ecNumber evidence="1">6.3.5.-</ecNumber>
    </recommendedName>
</protein>
<evidence type="ECO:0000255" key="1">
    <source>
        <dbReference type="HAMAP-Rule" id="MF_00122"/>
    </source>
</evidence>
<sequence length="97" mass="11397">MTKITKEEVNKVAHLARLELNENEINNHAEQLEKILDYIRQLEKIDTDDVPCTTRAIEVVNVFRKDEKKNSDCNEELLELGPSREDKYFKVPKILNE</sequence>
<keyword id="KW-0067">ATP-binding</keyword>
<keyword id="KW-0436">Ligase</keyword>
<keyword id="KW-0547">Nucleotide-binding</keyword>
<keyword id="KW-0648">Protein biosynthesis</keyword>
<organism>
    <name type="scientific">Prochlorococcus marinus (strain AS9601)</name>
    <dbReference type="NCBI Taxonomy" id="146891"/>
    <lineage>
        <taxon>Bacteria</taxon>
        <taxon>Bacillati</taxon>
        <taxon>Cyanobacteriota</taxon>
        <taxon>Cyanophyceae</taxon>
        <taxon>Synechococcales</taxon>
        <taxon>Prochlorococcaceae</taxon>
        <taxon>Prochlorococcus</taxon>
    </lineage>
</organism>
<name>GATC_PROMS</name>
<feature type="chain" id="PRO_1000016175" description="Aspartyl/glutamyl-tRNA(Asn/Gln) amidotransferase subunit C">
    <location>
        <begin position="1"/>
        <end position="97"/>
    </location>
</feature>
<comment type="function">
    <text evidence="1">Allows the formation of correctly charged Asn-tRNA(Asn) or Gln-tRNA(Gln) through the transamidation of misacylated Asp-tRNA(Asn) or Glu-tRNA(Gln) in organisms which lack either or both of asparaginyl-tRNA or glutaminyl-tRNA synthetases. The reaction takes place in the presence of glutamine and ATP through an activated phospho-Asp-tRNA(Asn) or phospho-Glu-tRNA(Gln).</text>
</comment>
<comment type="catalytic activity">
    <reaction evidence="1">
        <text>L-glutamyl-tRNA(Gln) + L-glutamine + ATP + H2O = L-glutaminyl-tRNA(Gln) + L-glutamate + ADP + phosphate + H(+)</text>
        <dbReference type="Rhea" id="RHEA:17521"/>
        <dbReference type="Rhea" id="RHEA-COMP:9681"/>
        <dbReference type="Rhea" id="RHEA-COMP:9684"/>
        <dbReference type="ChEBI" id="CHEBI:15377"/>
        <dbReference type="ChEBI" id="CHEBI:15378"/>
        <dbReference type="ChEBI" id="CHEBI:29985"/>
        <dbReference type="ChEBI" id="CHEBI:30616"/>
        <dbReference type="ChEBI" id="CHEBI:43474"/>
        <dbReference type="ChEBI" id="CHEBI:58359"/>
        <dbReference type="ChEBI" id="CHEBI:78520"/>
        <dbReference type="ChEBI" id="CHEBI:78521"/>
        <dbReference type="ChEBI" id="CHEBI:456216"/>
    </reaction>
</comment>
<comment type="catalytic activity">
    <reaction evidence="1">
        <text>L-aspartyl-tRNA(Asn) + L-glutamine + ATP + H2O = L-asparaginyl-tRNA(Asn) + L-glutamate + ADP + phosphate + 2 H(+)</text>
        <dbReference type="Rhea" id="RHEA:14513"/>
        <dbReference type="Rhea" id="RHEA-COMP:9674"/>
        <dbReference type="Rhea" id="RHEA-COMP:9677"/>
        <dbReference type="ChEBI" id="CHEBI:15377"/>
        <dbReference type="ChEBI" id="CHEBI:15378"/>
        <dbReference type="ChEBI" id="CHEBI:29985"/>
        <dbReference type="ChEBI" id="CHEBI:30616"/>
        <dbReference type="ChEBI" id="CHEBI:43474"/>
        <dbReference type="ChEBI" id="CHEBI:58359"/>
        <dbReference type="ChEBI" id="CHEBI:78515"/>
        <dbReference type="ChEBI" id="CHEBI:78516"/>
        <dbReference type="ChEBI" id="CHEBI:456216"/>
    </reaction>
</comment>
<comment type="subunit">
    <text evidence="1">Heterotrimer of A, B and C subunits.</text>
</comment>
<comment type="similarity">
    <text evidence="1">Belongs to the GatC family.</text>
</comment>
<gene>
    <name evidence="1" type="primary">gatC</name>
    <name type="ordered locus">A9601_02561</name>
</gene>